<proteinExistence type="evidence at protein level"/>
<feature type="chain" id="PRO_0000078187" description="Astacin-like peptidase p18">
    <location>
        <begin position="1"/>
        <end position="20" status="greater than"/>
    </location>
</feature>
<feature type="domain" description="Peptidase M12A" evidence="1">
    <location>
        <begin position="1"/>
        <end position="20" status="greater than"/>
    </location>
</feature>
<feature type="non-terminal residue" evidence="3">
    <location>
        <position position="20"/>
    </location>
</feature>
<sequence>NAIPGNYYRWPYAKVPYVID</sequence>
<dbReference type="EC" id="3.4.24.-"/>
<dbReference type="GO" id="GO:0046872">
    <property type="term" value="F:metal ion binding"/>
    <property type="evidence" value="ECO:0007669"/>
    <property type="project" value="UniProtKB-KW"/>
</dbReference>
<dbReference type="GO" id="GO:0004222">
    <property type="term" value="F:metalloendopeptidase activity"/>
    <property type="evidence" value="ECO:0007669"/>
    <property type="project" value="InterPro"/>
</dbReference>
<dbReference type="GO" id="GO:0006508">
    <property type="term" value="P:proteolysis"/>
    <property type="evidence" value="ECO:0007669"/>
    <property type="project" value="UniProtKB-KW"/>
</dbReference>
<dbReference type="InterPro" id="IPR001506">
    <property type="entry name" value="Peptidase_M12A"/>
</dbReference>
<dbReference type="PROSITE" id="PS51864">
    <property type="entry name" value="ASTACIN"/>
    <property type="match status" value="1"/>
</dbReference>
<protein>
    <recommendedName>
        <fullName>Astacin-like peptidase p18</fullName>
        <ecNumber>3.4.24.-</ecNumber>
    </recommendedName>
</protein>
<reference key="1">
    <citation type="journal article" date="2006" name="Comp. Biochem. Physiol.">
        <title>Astacin family metallopeptidases and serine peptidase inhibitors in spider digestive fluid.</title>
        <authorList>
            <person name="Foradori M.J."/>
            <person name="Tillinghast E.K."/>
            <person name="Smith J.S."/>
            <person name="Townley M.A."/>
            <person name="Mooney R.E."/>
        </authorList>
    </citation>
    <scope>PROTEIN SEQUENCE</scope>
    <scope>FUNCTION</scope>
    <scope>COFACTOR</scope>
</reference>
<name>PEP18_ARGAU</name>
<organism>
    <name type="scientific">Argiope aurantia</name>
    <name type="common">Black-and-yellow garden spider</name>
    <dbReference type="NCBI Taxonomy" id="156844"/>
    <lineage>
        <taxon>Eukaryota</taxon>
        <taxon>Metazoa</taxon>
        <taxon>Ecdysozoa</taxon>
        <taxon>Arthropoda</taxon>
        <taxon>Chelicerata</taxon>
        <taxon>Arachnida</taxon>
        <taxon>Araneae</taxon>
        <taxon>Araneomorphae</taxon>
        <taxon>Entelegynae</taxon>
        <taxon>Araneoidea</taxon>
        <taxon>Araneidae</taxon>
        <taxon>Argiope</taxon>
    </lineage>
</organism>
<accession>P84749</accession>
<comment type="function">
    <text evidence="2">Active against casein. Has a role as a digestive enzyme.</text>
</comment>
<comment type="cofactor">
    <cofactor evidence="2">
        <name>Zn(2+)</name>
        <dbReference type="ChEBI" id="CHEBI:29105"/>
    </cofactor>
</comment>
<keyword id="KW-0903">Direct protein sequencing</keyword>
<keyword id="KW-0378">Hydrolase</keyword>
<keyword id="KW-0479">Metal-binding</keyword>
<keyword id="KW-0482">Metalloprotease</keyword>
<keyword id="KW-0645">Protease</keyword>
<keyword id="KW-0862">Zinc</keyword>
<evidence type="ECO:0000255" key="1">
    <source>
        <dbReference type="PROSITE-ProRule" id="PRU01211"/>
    </source>
</evidence>
<evidence type="ECO:0000269" key="2">
    <source>
    </source>
</evidence>
<evidence type="ECO:0000303" key="3">
    <source>
    </source>
</evidence>